<protein>
    <recommendedName>
        <fullName evidence="1">Leucyl/phenylalanyl-tRNA--protein transferase</fullName>
        <ecNumber evidence="1">2.3.2.6</ecNumber>
    </recommendedName>
    <alternativeName>
        <fullName evidence="1">L/F-transferase</fullName>
    </alternativeName>
    <alternativeName>
        <fullName evidence="1">Leucyltransferase</fullName>
    </alternativeName>
    <alternativeName>
        <fullName evidence="1">Phenyalanyltransferase</fullName>
    </alternativeName>
</protein>
<organism>
    <name type="scientific">Salmonella choleraesuis (strain SC-B67)</name>
    <dbReference type="NCBI Taxonomy" id="321314"/>
    <lineage>
        <taxon>Bacteria</taxon>
        <taxon>Pseudomonadati</taxon>
        <taxon>Pseudomonadota</taxon>
        <taxon>Gammaproteobacteria</taxon>
        <taxon>Enterobacterales</taxon>
        <taxon>Enterobacteriaceae</taxon>
        <taxon>Salmonella</taxon>
    </lineage>
</organism>
<accession>Q57R46</accession>
<feature type="chain" id="PRO_0000258096" description="Leucyl/phenylalanyl-tRNA--protein transferase">
    <location>
        <begin position="1"/>
        <end position="234"/>
    </location>
</feature>
<name>LFTR_SALCH</name>
<dbReference type="EC" id="2.3.2.6" evidence="1"/>
<dbReference type="EMBL" id="AE017220">
    <property type="protein sequence ID" value="AAX64815.1"/>
    <property type="molecule type" value="Genomic_DNA"/>
</dbReference>
<dbReference type="RefSeq" id="WP_001241650.1">
    <property type="nucleotide sequence ID" value="NC_006905.1"/>
</dbReference>
<dbReference type="SMR" id="Q57R46"/>
<dbReference type="KEGG" id="sec:SCH_0909"/>
<dbReference type="HOGENOM" id="CLU_075045_0_0_6"/>
<dbReference type="Proteomes" id="UP000000538">
    <property type="component" value="Chromosome"/>
</dbReference>
<dbReference type="GO" id="GO:0005737">
    <property type="term" value="C:cytoplasm"/>
    <property type="evidence" value="ECO:0007669"/>
    <property type="project" value="UniProtKB-SubCell"/>
</dbReference>
<dbReference type="GO" id="GO:0008914">
    <property type="term" value="F:leucyl-tRNA--protein transferase activity"/>
    <property type="evidence" value="ECO:0007669"/>
    <property type="project" value="UniProtKB-UniRule"/>
</dbReference>
<dbReference type="GO" id="GO:0030163">
    <property type="term" value="P:protein catabolic process"/>
    <property type="evidence" value="ECO:0007669"/>
    <property type="project" value="UniProtKB-UniRule"/>
</dbReference>
<dbReference type="FunFam" id="3.30.70.3550:FF:000001">
    <property type="entry name" value="Leucyl/phenylalanyl-tRNA--protein transferase"/>
    <property type="match status" value="1"/>
</dbReference>
<dbReference type="FunFam" id="3.40.630.70:FF:000001">
    <property type="entry name" value="Leucyl/phenylalanyl-tRNA--protein transferase"/>
    <property type="match status" value="1"/>
</dbReference>
<dbReference type="Gene3D" id="3.40.630.70">
    <property type="entry name" value="Leucyl/phenylalanyl-tRNA-protein transferase, C-terminal domain"/>
    <property type="match status" value="1"/>
</dbReference>
<dbReference type="Gene3D" id="3.30.70.3550">
    <property type="entry name" value="Leucyl/phenylalanyl-tRNA-protein transferase, N-terminal domain"/>
    <property type="match status" value="1"/>
</dbReference>
<dbReference type="HAMAP" id="MF_00688">
    <property type="entry name" value="Leu_Phe_trans"/>
    <property type="match status" value="1"/>
</dbReference>
<dbReference type="InterPro" id="IPR016181">
    <property type="entry name" value="Acyl_CoA_acyltransferase"/>
</dbReference>
<dbReference type="InterPro" id="IPR004616">
    <property type="entry name" value="Leu/Phe-tRNA_Trfase"/>
</dbReference>
<dbReference type="InterPro" id="IPR042203">
    <property type="entry name" value="Leu/Phe-tRNA_Trfase_C"/>
</dbReference>
<dbReference type="InterPro" id="IPR042221">
    <property type="entry name" value="Leu/Phe-tRNA_Trfase_N"/>
</dbReference>
<dbReference type="NCBIfam" id="TIGR00667">
    <property type="entry name" value="aat"/>
    <property type="match status" value="1"/>
</dbReference>
<dbReference type="PANTHER" id="PTHR30098">
    <property type="entry name" value="LEUCYL/PHENYLALANYL-TRNA--PROTEIN TRANSFERASE"/>
    <property type="match status" value="1"/>
</dbReference>
<dbReference type="PANTHER" id="PTHR30098:SF2">
    <property type="entry name" value="LEUCYL_PHENYLALANYL-TRNA--PROTEIN TRANSFERASE"/>
    <property type="match status" value="1"/>
</dbReference>
<dbReference type="Pfam" id="PF03588">
    <property type="entry name" value="Leu_Phe_trans"/>
    <property type="match status" value="1"/>
</dbReference>
<dbReference type="SUPFAM" id="SSF55729">
    <property type="entry name" value="Acyl-CoA N-acyltransferases (Nat)"/>
    <property type="match status" value="1"/>
</dbReference>
<sequence length="234" mass="26673">MRLVQLSRHSIAFPSPEGALREPNGLLALGGDLSPARLLMAYQHGIFPWFSPGDPILWWSPDPRAVLWPEKFHLSRSMKRFHNASPYRVTLNYAFDRVIDGCANHRDEGTWITRGIEEAYRRLHELGHAHSIEVWRDRELVGGMYGVSQGALFCGESMFSRQENASKTALLVFCAEFTRHGGKLIDCQVLNSHTASLGAIEIPRRDYLDHLAALRQQPLASRFWVPRTLFLPRK</sequence>
<evidence type="ECO:0000255" key="1">
    <source>
        <dbReference type="HAMAP-Rule" id="MF_00688"/>
    </source>
</evidence>
<reference key="1">
    <citation type="journal article" date="2005" name="Nucleic Acids Res.">
        <title>The genome sequence of Salmonella enterica serovar Choleraesuis, a highly invasive and resistant zoonotic pathogen.</title>
        <authorList>
            <person name="Chiu C.-H."/>
            <person name="Tang P."/>
            <person name="Chu C."/>
            <person name="Hu S."/>
            <person name="Bao Q."/>
            <person name="Yu J."/>
            <person name="Chou Y.-Y."/>
            <person name="Wang H.-S."/>
            <person name="Lee Y.-S."/>
        </authorList>
    </citation>
    <scope>NUCLEOTIDE SEQUENCE [LARGE SCALE GENOMIC DNA]</scope>
    <source>
        <strain>SC-B67</strain>
    </source>
</reference>
<gene>
    <name evidence="1" type="primary">aat</name>
    <name type="ordered locus">SCH_0909</name>
</gene>
<comment type="function">
    <text evidence="1">Functions in the N-end rule pathway of protein degradation where it conjugates Leu, Phe and, less efficiently, Met from aminoacyl-tRNAs to the N-termini of proteins containing an N-terminal arginine or lysine.</text>
</comment>
<comment type="catalytic activity">
    <reaction evidence="1">
        <text>N-terminal L-lysyl-[protein] + L-leucyl-tRNA(Leu) = N-terminal L-leucyl-L-lysyl-[protein] + tRNA(Leu) + H(+)</text>
        <dbReference type="Rhea" id="RHEA:12340"/>
        <dbReference type="Rhea" id="RHEA-COMP:9613"/>
        <dbReference type="Rhea" id="RHEA-COMP:9622"/>
        <dbReference type="Rhea" id="RHEA-COMP:12670"/>
        <dbReference type="Rhea" id="RHEA-COMP:12671"/>
        <dbReference type="ChEBI" id="CHEBI:15378"/>
        <dbReference type="ChEBI" id="CHEBI:65249"/>
        <dbReference type="ChEBI" id="CHEBI:78442"/>
        <dbReference type="ChEBI" id="CHEBI:78494"/>
        <dbReference type="ChEBI" id="CHEBI:133043"/>
        <dbReference type="EC" id="2.3.2.6"/>
    </reaction>
</comment>
<comment type="catalytic activity">
    <reaction evidence="1">
        <text>N-terminal L-arginyl-[protein] + L-leucyl-tRNA(Leu) = N-terminal L-leucyl-L-arginyl-[protein] + tRNA(Leu) + H(+)</text>
        <dbReference type="Rhea" id="RHEA:50416"/>
        <dbReference type="Rhea" id="RHEA-COMP:9613"/>
        <dbReference type="Rhea" id="RHEA-COMP:9622"/>
        <dbReference type="Rhea" id="RHEA-COMP:12672"/>
        <dbReference type="Rhea" id="RHEA-COMP:12673"/>
        <dbReference type="ChEBI" id="CHEBI:15378"/>
        <dbReference type="ChEBI" id="CHEBI:64719"/>
        <dbReference type="ChEBI" id="CHEBI:78442"/>
        <dbReference type="ChEBI" id="CHEBI:78494"/>
        <dbReference type="ChEBI" id="CHEBI:133044"/>
        <dbReference type="EC" id="2.3.2.6"/>
    </reaction>
</comment>
<comment type="catalytic activity">
    <reaction evidence="1">
        <text>L-phenylalanyl-tRNA(Phe) + an N-terminal L-alpha-aminoacyl-[protein] = an N-terminal L-phenylalanyl-L-alpha-aminoacyl-[protein] + tRNA(Phe)</text>
        <dbReference type="Rhea" id="RHEA:43632"/>
        <dbReference type="Rhea" id="RHEA-COMP:9668"/>
        <dbReference type="Rhea" id="RHEA-COMP:9699"/>
        <dbReference type="Rhea" id="RHEA-COMP:10636"/>
        <dbReference type="Rhea" id="RHEA-COMP:10637"/>
        <dbReference type="ChEBI" id="CHEBI:78442"/>
        <dbReference type="ChEBI" id="CHEBI:78531"/>
        <dbReference type="ChEBI" id="CHEBI:78597"/>
        <dbReference type="ChEBI" id="CHEBI:83561"/>
        <dbReference type="EC" id="2.3.2.6"/>
    </reaction>
</comment>
<comment type="subcellular location">
    <subcellularLocation>
        <location evidence="1">Cytoplasm</location>
    </subcellularLocation>
</comment>
<comment type="similarity">
    <text evidence="1">Belongs to the L/F-transferase family.</text>
</comment>
<proteinExistence type="inferred from homology"/>
<keyword id="KW-0012">Acyltransferase</keyword>
<keyword id="KW-0963">Cytoplasm</keyword>
<keyword id="KW-0808">Transferase</keyword>